<dbReference type="EMBL" id="AE017355">
    <property type="protein sequence ID" value="AAT60572.1"/>
    <property type="molecule type" value="Genomic_DNA"/>
</dbReference>
<dbReference type="RefSeq" id="WP_000990712.1">
    <property type="nucleotide sequence ID" value="NC_005957.1"/>
</dbReference>
<dbReference type="RefSeq" id="YP_037842.1">
    <property type="nucleotide sequence ID" value="NC_005957.1"/>
</dbReference>
<dbReference type="SMR" id="Q6HF34"/>
<dbReference type="KEGG" id="btk:BT9727_3522"/>
<dbReference type="PATRIC" id="fig|281309.8.peg.3759"/>
<dbReference type="HOGENOM" id="CLU_030805_9_3_9"/>
<dbReference type="Proteomes" id="UP000001301">
    <property type="component" value="Chromosome"/>
</dbReference>
<dbReference type="CDD" id="cd00885">
    <property type="entry name" value="cinA"/>
    <property type="match status" value="1"/>
</dbReference>
<dbReference type="Gene3D" id="3.30.70.2860">
    <property type="match status" value="1"/>
</dbReference>
<dbReference type="Gene3D" id="3.90.950.20">
    <property type="entry name" value="CinA-like"/>
    <property type="match status" value="1"/>
</dbReference>
<dbReference type="Gene3D" id="3.40.980.10">
    <property type="entry name" value="MoaB/Mog-like domain"/>
    <property type="match status" value="1"/>
</dbReference>
<dbReference type="HAMAP" id="MF_00226_B">
    <property type="entry name" value="CinA_B"/>
    <property type="match status" value="1"/>
</dbReference>
<dbReference type="InterPro" id="IPR050101">
    <property type="entry name" value="CinA"/>
</dbReference>
<dbReference type="InterPro" id="IPR036653">
    <property type="entry name" value="CinA-like_C"/>
</dbReference>
<dbReference type="InterPro" id="IPR008136">
    <property type="entry name" value="CinA_C"/>
</dbReference>
<dbReference type="InterPro" id="IPR041424">
    <property type="entry name" value="CinA_KH"/>
</dbReference>
<dbReference type="InterPro" id="IPR008135">
    <property type="entry name" value="Competence-induced_CinA"/>
</dbReference>
<dbReference type="InterPro" id="IPR036425">
    <property type="entry name" value="MoaB/Mog-like_dom_sf"/>
</dbReference>
<dbReference type="InterPro" id="IPR001453">
    <property type="entry name" value="MoaB/Mog_dom"/>
</dbReference>
<dbReference type="NCBIfam" id="TIGR00200">
    <property type="entry name" value="cinA_nterm"/>
    <property type="match status" value="1"/>
</dbReference>
<dbReference type="NCBIfam" id="TIGR00177">
    <property type="entry name" value="molyb_syn"/>
    <property type="match status" value="1"/>
</dbReference>
<dbReference type="NCBIfam" id="TIGR00199">
    <property type="entry name" value="PncC_domain"/>
    <property type="match status" value="1"/>
</dbReference>
<dbReference type="NCBIfam" id="NF001813">
    <property type="entry name" value="PRK00549.1"/>
    <property type="match status" value="1"/>
</dbReference>
<dbReference type="PANTHER" id="PTHR13939">
    <property type="entry name" value="NICOTINAMIDE-NUCLEOTIDE AMIDOHYDROLASE PNCC"/>
    <property type="match status" value="1"/>
</dbReference>
<dbReference type="PANTHER" id="PTHR13939:SF0">
    <property type="entry name" value="NMN AMIDOHYDROLASE-LIKE PROTEIN YFAY"/>
    <property type="match status" value="1"/>
</dbReference>
<dbReference type="Pfam" id="PF02464">
    <property type="entry name" value="CinA"/>
    <property type="match status" value="1"/>
</dbReference>
<dbReference type="Pfam" id="PF18146">
    <property type="entry name" value="CinA_KH"/>
    <property type="match status" value="1"/>
</dbReference>
<dbReference type="Pfam" id="PF00994">
    <property type="entry name" value="MoCF_biosynth"/>
    <property type="match status" value="1"/>
</dbReference>
<dbReference type="PIRSF" id="PIRSF006728">
    <property type="entry name" value="CinA"/>
    <property type="match status" value="1"/>
</dbReference>
<dbReference type="SMART" id="SM00852">
    <property type="entry name" value="MoCF_biosynth"/>
    <property type="match status" value="1"/>
</dbReference>
<dbReference type="SUPFAM" id="SSF142433">
    <property type="entry name" value="CinA-like"/>
    <property type="match status" value="1"/>
</dbReference>
<dbReference type="SUPFAM" id="SSF53218">
    <property type="entry name" value="Molybdenum cofactor biosynthesis proteins"/>
    <property type="match status" value="1"/>
</dbReference>
<comment type="similarity">
    <text evidence="1">Belongs to the CinA family.</text>
</comment>
<evidence type="ECO:0000255" key="1">
    <source>
        <dbReference type="HAMAP-Rule" id="MF_00226"/>
    </source>
</evidence>
<reference key="1">
    <citation type="journal article" date="2006" name="J. Bacteriol.">
        <title>Pathogenomic sequence analysis of Bacillus cereus and Bacillus thuringiensis isolates closely related to Bacillus anthracis.</title>
        <authorList>
            <person name="Han C.S."/>
            <person name="Xie G."/>
            <person name="Challacombe J.F."/>
            <person name="Altherr M.R."/>
            <person name="Bhotika S.S."/>
            <person name="Bruce D."/>
            <person name="Campbell C.S."/>
            <person name="Campbell M.L."/>
            <person name="Chen J."/>
            <person name="Chertkov O."/>
            <person name="Cleland C."/>
            <person name="Dimitrijevic M."/>
            <person name="Doggett N.A."/>
            <person name="Fawcett J.J."/>
            <person name="Glavina T."/>
            <person name="Goodwin L.A."/>
            <person name="Hill K.K."/>
            <person name="Hitchcock P."/>
            <person name="Jackson P.J."/>
            <person name="Keim P."/>
            <person name="Kewalramani A.R."/>
            <person name="Longmire J."/>
            <person name="Lucas S."/>
            <person name="Malfatti S."/>
            <person name="McMurry K."/>
            <person name="Meincke L.J."/>
            <person name="Misra M."/>
            <person name="Moseman B.L."/>
            <person name="Mundt M."/>
            <person name="Munk A.C."/>
            <person name="Okinaka R.T."/>
            <person name="Parson-Quintana B."/>
            <person name="Reilly L.P."/>
            <person name="Richardson P."/>
            <person name="Robinson D.L."/>
            <person name="Rubin E."/>
            <person name="Saunders E."/>
            <person name="Tapia R."/>
            <person name="Tesmer J.G."/>
            <person name="Thayer N."/>
            <person name="Thompson L.S."/>
            <person name="Tice H."/>
            <person name="Ticknor L.O."/>
            <person name="Wills P.L."/>
            <person name="Brettin T.S."/>
            <person name="Gilna P."/>
        </authorList>
    </citation>
    <scope>NUCLEOTIDE SEQUENCE [LARGE SCALE GENOMIC DNA]</scope>
    <source>
        <strain>97-27</strain>
    </source>
</reference>
<name>CINA_BACHK</name>
<feature type="chain" id="PRO_0000156751" description="Putative competence-damage inducible protein">
    <location>
        <begin position="1"/>
        <end position="412"/>
    </location>
</feature>
<proteinExistence type="inferred from homology"/>
<protein>
    <recommendedName>
        <fullName evidence="1">Putative competence-damage inducible protein</fullName>
    </recommendedName>
</protein>
<sequence>MNAEIIAVGTELLLGQIANTNAQFLSEKLASIGINVYYHTVVGDNNKRLQQAIEVAEERADMLIFTGGLGPTKDDLTKETIASSLAEELVYDEKALASISDYFKRTGREFTENNKKQALVLDGATVFANDHGMAPGMGLNKNGKVYILLPGPPKEMKPMYVSYVEPFLRNFTTGENIYSRVLRFFGIGESQLEVKVQDLIDGQTNPTIAPLANDGEVTLRLTAKHQNVDEAEKLIQHVEDLILERVGEFFYGYDQEFLHDKAIELLKKKGLTLACAESLTGGLFGNQVTESAGVSSVFKGGVICYHNDVKQHVLHVPEEVLFTDGAVSKECARYLAENVKELLEADIGISFTGVAGPDASEHKEPGTVFVGLAIKDEPTVVFPLNLSGSRQQIRERSAKYGFYHLYKKLEEI</sequence>
<accession>Q6HF34</accession>
<organism>
    <name type="scientific">Bacillus thuringiensis subsp. konkukian (strain 97-27)</name>
    <dbReference type="NCBI Taxonomy" id="281309"/>
    <lineage>
        <taxon>Bacteria</taxon>
        <taxon>Bacillati</taxon>
        <taxon>Bacillota</taxon>
        <taxon>Bacilli</taxon>
        <taxon>Bacillales</taxon>
        <taxon>Bacillaceae</taxon>
        <taxon>Bacillus</taxon>
        <taxon>Bacillus cereus group</taxon>
    </lineage>
</organism>
<gene>
    <name evidence="1" type="primary">cinA</name>
    <name type="ordered locus">BT9727_3522</name>
</gene>